<accession>Q9BRC7</accession>
<accession>Q53FS8</accession>
<organism>
    <name type="scientific">Homo sapiens</name>
    <name type="common">Human</name>
    <dbReference type="NCBI Taxonomy" id="9606"/>
    <lineage>
        <taxon>Eukaryota</taxon>
        <taxon>Metazoa</taxon>
        <taxon>Chordata</taxon>
        <taxon>Craniata</taxon>
        <taxon>Vertebrata</taxon>
        <taxon>Euteleostomi</taxon>
        <taxon>Mammalia</taxon>
        <taxon>Eutheria</taxon>
        <taxon>Euarchontoglires</taxon>
        <taxon>Primates</taxon>
        <taxon>Haplorrhini</taxon>
        <taxon>Catarrhini</taxon>
        <taxon>Hominidae</taxon>
        <taxon>Homo</taxon>
    </lineage>
</organism>
<comment type="function">
    <text evidence="10">Hydrolyzes the phosphatidylinositol 4,5-bisphosphate (PIP2) to generate 2 second messenger molecules diacylglycerol (DAG) and inositol 1,4,5-trisphosphate (IP3). DAG mediates the activation of protein kinase C (PKC), while IP3 releases Ca(2+) from intracellular stores. Required for acrosome reaction in sperm during fertilization, probably by acting as an important enzyme for intracellular Ca(2+) mobilization in the zona pellucida-induced acrosome reaction. May play a role in cell growth. Modulates the liver regeneration in cooperation with nuclear PKC. Overexpression up-regulates the Erk signaling pathway and proliferation.</text>
</comment>
<comment type="function">
    <molecule>Isoform 2</molecule>
    <text evidence="12">Acts as a non-receptor guanine nucleotide exchange factor which binds to and activates guanine nucleotide-binding protein (G-protein) alpha subunit GNAI3.</text>
</comment>
<comment type="catalytic activity">
    <reaction evidence="10">
        <text>a 1,2-diacyl-sn-glycero-3-phospho-(1D-myo-inositol-4,5-bisphosphate) + H2O = 1D-myo-inositol 1,4,5-trisphosphate + a 1,2-diacyl-sn-glycerol + H(+)</text>
        <dbReference type="Rhea" id="RHEA:33179"/>
        <dbReference type="ChEBI" id="CHEBI:15377"/>
        <dbReference type="ChEBI" id="CHEBI:15378"/>
        <dbReference type="ChEBI" id="CHEBI:17815"/>
        <dbReference type="ChEBI" id="CHEBI:58456"/>
        <dbReference type="ChEBI" id="CHEBI:203600"/>
        <dbReference type="EC" id="3.1.4.11"/>
    </reaction>
    <physiologicalReaction direction="left-to-right" evidence="15">
        <dbReference type="Rhea" id="RHEA:33180"/>
    </physiologicalReaction>
</comment>
<comment type="catalytic activity">
    <reaction evidence="10">
        <text>a 1,2-diacyl-sn-glycero-3-phospho-(1D-myo-inositol) + H2O = 1D-myo-inositol 1-phosphate + a 1,2-diacyl-sn-glycerol + H(+)</text>
        <dbReference type="Rhea" id="RHEA:43484"/>
        <dbReference type="ChEBI" id="CHEBI:15377"/>
        <dbReference type="ChEBI" id="CHEBI:15378"/>
        <dbReference type="ChEBI" id="CHEBI:17815"/>
        <dbReference type="ChEBI" id="CHEBI:57880"/>
        <dbReference type="ChEBI" id="CHEBI:58433"/>
    </reaction>
    <physiologicalReaction direction="left-to-right" evidence="15">
        <dbReference type="Rhea" id="RHEA:43485"/>
    </physiologicalReaction>
</comment>
<comment type="cofactor">
    <cofactor evidence="4">
        <name>Ca(2+)</name>
        <dbReference type="ChEBI" id="CHEBI:29108"/>
    </cofactor>
    <text evidence="1">Binds 5 Ca(2+) ions per subunit. Two of the Ca(2+) ions are bound to the C2 domain.</text>
</comment>
<comment type="subunit">
    <text evidence="3">Interacts with GRIP1 (By similarity).</text>
</comment>
<comment type="subunit">
    <molecule>Isoform 2</molecule>
    <text evidence="12">Interacts (via GBA motif) with guanine nucleotide-binding protein G(i) alpha subunit GNAI3 (inactive GDP-bound form); high-affinity interaction (PubMed:30194280).</text>
</comment>
<comment type="subunit">
    <molecule>Isoform 1</molecule>
    <text evidence="12">Interacts (via GBA motif) with guanine nucleotide-binding protein G(i) alpha subunit GNAI3 (inactive GDP-bound form); low-affinity interaction (PubMed:30194280).</text>
</comment>
<comment type="interaction">
    <interactant intactId="EBI-748799">
        <id>Q9BRC7</id>
    </interactant>
    <interactant intactId="EBI-2864512">
        <id>P50221</id>
        <label>MEOX1</label>
    </interactant>
    <organismsDiffer>false</organismsDiffer>
    <experiments>3</experiments>
</comment>
<comment type="interaction">
    <interactant intactId="EBI-748799">
        <id>Q9BRC7</id>
    </interactant>
    <interactant intactId="EBI-16439278">
        <id>Q6FHY5</id>
        <label>MEOX2</label>
    </interactant>
    <organismsDiffer>false</organismsDiffer>
    <experiments>3</experiments>
</comment>
<comment type="subcellular location">
    <subcellularLocation>
        <location evidence="1">Membrane</location>
        <topology evidence="1">Peripheral membrane protein</topology>
    </subcellularLocation>
    <subcellularLocation>
        <location evidence="1">Nucleus</location>
    </subcellularLocation>
    <subcellularLocation>
        <location evidence="10">Cytoplasm</location>
    </subcellularLocation>
    <subcellularLocation>
        <location evidence="1">Endoplasmic reticulum</location>
    </subcellularLocation>
    <text>Localizes primarily to intracellular membranes mostly to the endoplasmic reticulum.</text>
</comment>
<comment type="alternative products">
    <event type="alternative splicing"/>
    <isoform>
        <id>Q9BRC7-1</id>
        <name>1</name>
        <sequence type="displayed"/>
    </isoform>
    <isoform>
        <id>Q9BRC7-2</id>
        <name>2</name>
        <name>PLCD4b</name>
        <sequence type="described" ref="VSP_028501 VSP_028502"/>
    </isoform>
</comment>
<comment type="tissue specificity">
    <text evidence="10 11">Highly expressed in skeletal muscle and kidney tissues, and at moderate level in intestinal tissue. Expressed in corneal epithelial cells.</text>
</comment>
<comment type="domain">
    <text>The PDZ-binding motif mediates the interaction with GRIP1.</text>
</comment>
<comment type="domain">
    <text>The C2 domain mediates pre-localization to the membrane prior to Ca(2+) import and non-selective Ca(2+)-mediated targeting to various cellular membranes.</text>
</comment>
<comment type="domain">
    <text>The PH domain is not a critical determinant of the membrane localization.</text>
</comment>
<comment type="domain">
    <text evidence="12">The GBA (G-alpha binding and activating) motif mediates binding to the alpha subunits of guanine nucleotide-binding proteins (G proteins).</text>
</comment>
<comment type="miscellaneous">
    <molecule>Isoform 1</molecule>
    <text>Acceptor splice site between exons 4 and 5 is non-canonical but conserved through species for that particular gene.</text>
</comment>
<comment type="miscellaneous">
    <molecule>Isoform 2</molecule>
    <text evidence="14">May be produced at very low levels due to a premature stop codon in the mRNA, leading to nonsense-mediated mRNA decay.</text>
</comment>
<keyword id="KW-0025">Alternative splicing</keyword>
<keyword id="KW-0106">Calcium</keyword>
<keyword id="KW-0963">Cytoplasm</keyword>
<keyword id="KW-0256">Endoplasmic reticulum</keyword>
<keyword id="KW-0344">Guanine-nucleotide releasing factor</keyword>
<keyword id="KW-0378">Hydrolase</keyword>
<keyword id="KW-0442">Lipid degradation</keyword>
<keyword id="KW-0443">Lipid metabolism</keyword>
<keyword id="KW-0472">Membrane</keyword>
<keyword id="KW-0479">Metal-binding</keyword>
<keyword id="KW-0539">Nucleus</keyword>
<keyword id="KW-0597">Phosphoprotein</keyword>
<keyword id="KW-1267">Proteomics identification</keyword>
<keyword id="KW-1185">Reference proteome</keyword>
<keyword id="KW-0677">Repeat</keyword>
<keyword id="KW-0807">Transducer</keyword>
<gene>
    <name evidence="16" type="primary">PLCD4</name>
</gene>
<feature type="chain" id="PRO_0000306824" description="1-phosphatidylinositol 4,5-bisphosphate phosphodiesterase delta-4">
    <location>
        <begin position="1"/>
        <end position="762"/>
    </location>
</feature>
<feature type="domain" description="PH" evidence="5">
    <location>
        <begin position="16"/>
        <end position="124"/>
    </location>
</feature>
<feature type="domain" description="EF-hand 1" evidence="8">
    <location>
        <begin position="134"/>
        <end position="169"/>
    </location>
</feature>
<feature type="domain" description="EF-hand 2" evidence="8">
    <location>
        <begin position="170"/>
        <end position="205"/>
    </location>
</feature>
<feature type="domain" description="EF-hand 3" evidence="8">
    <location>
        <begin position="206"/>
        <end position="237"/>
    </location>
</feature>
<feature type="domain" description="PI-PLC X-box" evidence="6">
    <location>
        <begin position="290"/>
        <end position="435"/>
    </location>
</feature>
<feature type="domain" description="PI-PLC Y-box" evidence="7">
    <location>
        <begin position="493"/>
        <end position="609"/>
    </location>
</feature>
<feature type="domain" description="C2" evidence="4">
    <location>
        <begin position="609"/>
        <end position="736"/>
    </location>
</feature>
<feature type="region of interest" description="Substrate binding" evidence="1">
    <location>
        <begin position="26"/>
        <end position="53"/>
    </location>
</feature>
<feature type="region of interest" description="Disordered" evidence="9">
    <location>
        <begin position="443"/>
        <end position="483"/>
    </location>
</feature>
<feature type="short sequence motif" description="GBA" evidence="12">
    <location>
        <begin position="213"/>
        <end position="243"/>
    </location>
</feature>
<feature type="short sequence motif" description="PDZ-binding">
    <location>
        <begin position="731"/>
        <end position="734"/>
    </location>
</feature>
<feature type="compositionally biased region" description="Acidic residues" evidence="9">
    <location>
        <begin position="443"/>
        <end position="471"/>
    </location>
</feature>
<feature type="active site" evidence="6">
    <location>
        <position position="305"/>
    </location>
</feature>
<feature type="active site" evidence="6">
    <location>
        <position position="350"/>
    </location>
</feature>
<feature type="binding site" evidence="8">
    <location>
        <position position="147"/>
    </location>
    <ligand>
        <name>Ca(2+)</name>
        <dbReference type="ChEBI" id="CHEBI:29108"/>
        <label>1</label>
    </ligand>
</feature>
<feature type="binding site" evidence="8">
    <location>
        <position position="149"/>
    </location>
    <ligand>
        <name>Ca(2+)</name>
        <dbReference type="ChEBI" id="CHEBI:29108"/>
        <label>1</label>
    </ligand>
</feature>
<feature type="binding site" evidence="8">
    <location>
        <position position="151"/>
    </location>
    <ligand>
        <name>Ca(2+)</name>
        <dbReference type="ChEBI" id="CHEBI:29108"/>
        <label>1</label>
    </ligand>
</feature>
<feature type="binding site" evidence="8">
    <location>
        <position position="153"/>
    </location>
    <ligand>
        <name>Ca(2+)</name>
        <dbReference type="ChEBI" id="CHEBI:29108"/>
        <label>1</label>
    </ligand>
</feature>
<feature type="binding site" evidence="8">
    <location>
        <position position="158"/>
    </location>
    <ligand>
        <name>Ca(2+)</name>
        <dbReference type="ChEBI" id="CHEBI:29108"/>
        <label>1</label>
    </ligand>
</feature>
<feature type="binding site" evidence="8">
    <location>
        <position position="183"/>
    </location>
    <ligand>
        <name>Ca(2+)</name>
        <dbReference type="ChEBI" id="CHEBI:29108"/>
        <label>2</label>
    </ligand>
</feature>
<feature type="binding site" evidence="8">
    <location>
        <position position="185"/>
    </location>
    <ligand>
        <name>Ca(2+)</name>
        <dbReference type="ChEBI" id="CHEBI:29108"/>
        <label>2</label>
    </ligand>
</feature>
<feature type="binding site" evidence="8">
    <location>
        <position position="187"/>
    </location>
    <ligand>
        <name>Ca(2+)</name>
        <dbReference type="ChEBI" id="CHEBI:29108"/>
        <label>2</label>
    </ligand>
</feature>
<feature type="binding site" evidence="8">
    <location>
        <position position="189"/>
    </location>
    <ligand>
        <name>Ca(2+)</name>
        <dbReference type="ChEBI" id="CHEBI:29108"/>
        <label>2</label>
    </ligand>
</feature>
<feature type="binding site" evidence="8">
    <location>
        <position position="194"/>
    </location>
    <ligand>
        <name>Ca(2+)</name>
        <dbReference type="ChEBI" id="CHEBI:29108"/>
        <label>2</label>
    </ligand>
</feature>
<feature type="binding site" evidence="1">
    <location>
        <position position="306"/>
    </location>
    <ligand>
        <name>Ca(2+)</name>
        <dbReference type="ChEBI" id="CHEBI:29108"/>
        <label>3</label>
        <note>catalytic</note>
    </ligand>
</feature>
<feature type="binding site" evidence="1">
    <location>
        <position position="335"/>
    </location>
    <ligand>
        <name>Ca(2+)</name>
        <dbReference type="ChEBI" id="CHEBI:29108"/>
        <label>3</label>
        <note>catalytic</note>
    </ligand>
</feature>
<feature type="binding site" evidence="1">
    <location>
        <position position="337"/>
    </location>
    <ligand>
        <name>Ca(2+)</name>
        <dbReference type="ChEBI" id="CHEBI:29108"/>
        <label>3</label>
        <note>catalytic</note>
    </ligand>
</feature>
<feature type="binding site" evidence="1">
    <location>
        <position position="384"/>
    </location>
    <ligand>
        <name>Ca(2+)</name>
        <dbReference type="ChEBI" id="CHEBI:29108"/>
        <label>3</label>
        <note>catalytic</note>
    </ligand>
</feature>
<feature type="binding site" evidence="1">
    <location>
        <position position="433"/>
    </location>
    <ligand>
        <name>substrate</name>
    </ligand>
</feature>
<feature type="binding site" evidence="1">
    <location>
        <position position="435"/>
    </location>
    <ligand>
        <name>substrate</name>
    </ligand>
</feature>
<feature type="binding site" evidence="1">
    <location>
        <position position="522"/>
    </location>
    <ligand>
        <name>substrate</name>
    </ligand>
</feature>
<feature type="binding site" evidence="1">
    <location>
        <position position="549"/>
    </location>
    <ligand>
        <name>substrate</name>
    </ligand>
</feature>
<feature type="binding site" evidence="1">
    <location>
        <position position="650"/>
    </location>
    <ligand>
        <name>Ca(2+)</name>
        <dbReference type="ChEBI" id="CHEBI:29108"/>
        <label>4</label>
    </ligand>
</feature>
<feature type="binding site" evidence="1">
    <location>
        <position position="652"/>
    </location>
    <ligand>
        <name>Ca(2+)</name>
        <dbReference type="ChEBI" id="CHEBI:29108"/>
        <label>4</label>
    </ligand>
</feature>
<feature type="binding site" evidence="1">
    <location>
        <position position="676"/>
    </location>
    <ligand>
        <name>Ca(2+)</name>
        <dbReference type="ChEBI" id="CHEBI:29108"/>
        <label>4</label>
    </ligand>
</feature>
<feature type="binding site" evidence="1">
    <location>
        <position position="705"/>
    </location>
    <ligand>
        <name>Ca(2+)</name>
        <dbReference type="ChEBI" id="CHEBI:29108"/>
        <label>5</label>
    </ligand>
</feature>
<feature type="binding site" evidence="1">
    <location>
        <position position="706"/>
    </location>
    <ligand>
        <name>Ca(2+)</name>
        <dbReference type="ChEBI" id="CHEBI:29108"/>
        <label>5</label>
    </ligand>
</feature>
<feature type="binding site" evidence="1">
    <location>
        <position position="707"/>
    </location>
    <ligand>
        <name>Ca(2+)</name>
        <dbReference type="ChEBI" id="CHEBI:29108"/>
        <label>5</label>
    </ligand>
</feature>
<feature type="modified residue" description="Phosphoserine" evidence="2">
    <location>
        <position position="457"/>
    </location>
</feature>
<feature type="splice variant" id="VSP_028501" description="In isoform 2." evidence="13">
    <original>KLRHVLSMDGFLSY</original>
    <variation>ASEEDPGEGEEVNT</variation>
    <location>
        <begin position="259"/>
        <end position="272"/>
    </location>
</feature>
<feature type="splice variant" id="VSP_028502" description="In isoform 2." evidence="13">
    <location>
        <begin position="273"/>
        <end position="762"/>
    </location>
</feature>
<feature type="mutagenesis site" description="Abolishes binding to and activation of GNAI3." evidence="12">
    <original>LLEFL</original>
    <variation>ALEAA</variation>
    <location>
        <begin position="224"/>
        <end position="228"/>
    </location>
</feature>
<feature type="mutagenesis site" description="Abolishes binding to GNAI3." evidence="12">
    <original>FL</original>
    <variation>AA</variation>
    <location>
        <begin position="227"/>
        <end position="228"/>
    </location>
</feature>
<feature type="mutagenesis site" description="Marked but incomplete decrease in GNAI3 binding and reduced activation of G-protein signaling." evidence="12">
    <original>F</original>
    <variation>A</variation>
    <location>
        <position position="227"/>
    </location>
</feature>
<feature type="sequence conflict" description="In Ref. 2; BAD96923." evidence="14" ref="2">
    <original>R</original>
    <variation>H</variation>
    <location>
        <position position="98"/>
    </location>
</feature>
<reference key="1">
    <citation type="journal article" date="2004" name="Mol. Cancer">
        <title>Phospholipase C delta-4 overexpression upregulates ErbB1/2 expression, Erk signaling pathway, and proliferation in MCF-7 cells.</title>
        <authorList>
            <person name="Leung D.W."/>
            <person name="Tompkins C."/>
            <person name="Brewer J."/>
            <person name="Ball A."/>
            <person name="Coon M."/>
            <person name="Morris V."/>
            <person name="Waggoner D."/>
            <person name="Singer J.W."/>
        </authorList>
    </citation>
    <scope>NUCLEOTIDE SEQUENCE [MRNA] (ISOFORM 2)</scope>
    <scope>FUNCTION</scope>
    <scope>SUBCELLULAR LOCATION</scope>
    <scope>TISSUE SPECIFICITY</scope>
    <scope>CATALYTIC ACTIVITY</scope>
</reference>
<reference key="2">
    <citation type="submission" date="2005-04" db="EMBL/GenBank/DDBJ databases">
        <authorList>
            <person name="Suzuki Y."/>
            <person name="Sugano S."/>
            <person name="Totoki Y."/>
            <person name="Toyoda A."/>
            <person name="Takeda T."/>
            <person name="Sakaki Y."/>
            <person name="Tanaka A."/>
            <person name="Yokoyama S."/>
        </authorList>
    </citation>
    <scope>NUCLEOTIDE SEQUENCE [LARGE SCALE MRNA] (ISOFORM 1)</scope>
    <source>
        <tissue>Kidney proximal tubule</tissue>
    </source>
</reference>
<reference key="3">
    <citation type="journal article" date="2004" name="Genome Res.">
        <title>The status, quality, and expansion of the NIH full-length cDNA project: the Mammalian Gene Collection (MGC).</title>
        <authorList>
            <consortium name="The MGC Project Team"/>
        </authorList>
    </citation>
    <scope>NUCLEOTIDE SEQUENCE [LARGE SCALE MRNA] (ISOFORM 1)</scope>
    <source>
        <tissue>Brain</tissue>
    </source>
</reference>
<reference key="4">
    <citation type="journal article" date="1999" name="Cytogenet. Cell Genet.">
        <title>Assignment of the human PLC delta4 gene (PLCD4) to human chromosome band 2q35 by fluorescence in situ hybridization.</title>
        <authorList>
            <person name="Kim H."/>
            <person name="Suh P.-G."/>
            <person name="Ryu S.H."/>
            <person name="Park S.H."/>
        </authorList>
    </citation>
    <scope>IDENTIFICATION</scope>
</reference>
<reference key="5">
    <citation type="journal article" date="2004" name="Invest. Ophthalmol. Vis. Sci.">
        <title>Expression of phospholipases A2 and C in human corneal epithelial cells.</title>
        <authorList>
            <person name="Landreville S."/>
            <person name="Coulombe S."/>
            <person name="Carrier P."/>
            <person name="Gelb M.H."/>
            <person name="Guerin S.L."/>
            <person name="Salesse C."/>
        </authorList>
    </citation>
    <scope>TISSUE SPECIFICITY</scope>
</reference>
<reference key="6">
    <citation type="journal article" date="2018" name="J. Biol. Chem.">
        <title>A biochemical and genetic discovery pipeline identifies PLCdelta4b as a nonreceptor activator of heterotrimeric G-proteins.</title>
        <authorList>
            <person name="Maziarz M."/>
            <person name="Broselid S."/>
            <person name="DiGiacomo V."/>
            <person name="Park J.C."/>
            <person name="Luebbers A."/>
            <person name="Garcia-Navarrete L."/>
            <person name="Blanco-Canosa J.B."/>
            <person name="Baillie G.S."/>
            <person name="Garcia-Marcos M."/>
        </authorList>
    </citation>
    <scope>FUNCTION (ISOFORM 2)</scope>
    <scope>INTERACTION WITH GNAI3</scope>
    <scope>GBA MOTIF</scope>
    <scope>MUTAGENESIS OF 224-LEU--LEU-228; PHE-227 AND 227-PHE-LEU-228</scope>
</reference>
<protein>
    <recommendedName>
        <fullName evidence="14">1-phosphatidylinositol 4,5-bisphosphate phosphodiesterase delta-4</fullName>
        <shortName>hPLCD4</shortName>
        <ecNumber evidence="10">3.1.4.11</ecNumber>
    </recommendedName>
    <alternativeName>
        <fullName>Phosphoinositide phospholipase C-delta-4</fullName>
    </alternativeName>
    <alternativeName>
        <fullName>Phospholipase C-delta-4</fullName>
        <shortName>PLC-delta-4</shortName>
    </alternativeName>
</protein>
<proteinExistence type="evidence at protein level"/>
<dbReference type="EC" id="3.1.4.11" evidence="10"/>
<dbReference type="EMBL" id="AY512961">
    <property type="protein sequence ID" value="AAS82574.1"/>
    <property type="molecule type" value="mRNA"/>
</dbReference>
<dbReference type="EMBL" id="AK223203">
    <property type="protein sequence ID" value="BAD96923.1"/>
    <property type="molecule type" value="mRNA"/>
</dbReference>
<dbReference type="EMBL" id="BC006355">
    <property type="protein sequence ID" value="AAH06355.1"/>
    <property type="molecule type" value="mRNA"/>
</dbReference>
<dbReference type="CCDS" id="CCDS46516.1">
    <molecule id="Q9BRC7-1"/>
</dbReference>
<dbReference type="RefSeq" id="NP_116115.1">
    <molecule id="Q9BRC7-1"/>
    <property type="nucleotide sequence ID" value="NM_032726.4"/>
</dbReference>
<dbReference type="SMR" id="Q9BRC7"/>
<dbReference type="BioGRID" id="124273">
    <property type="interactions" value="33"/>
</dbReference>
<dbReference type="FunCoup" id="Q9BRC7">
    <property type="interactions" value="833"/>
</dbReference>
<dbReference type="IntAct" id="Q9BRC7">
    <property type="interactions" value="26"/>
</dbReference>
<dbReference type="STRING" id="9606.ENSP00000388631"/>
<dbReference type="SwissLipids" id="SLP:000001758"/>
<dbReference type="iPTMnet" id="Q9BRC7"/>
<dbReference type="PhosphoSitePlus" id="Q9BRC7"/>
<dbReference type="BioMuta" id="PLCD4"/>
<dbReference type="DMDM" id="74732863"/>
<dbReference type="jPOST" id="Q9BRC7"/>
<dbReference type="MassIVE" id="Q9BRC7"/>
<dbReference type="PaxDb" id="9606-ENSP00000388631"/>
<dbReference type="PeptideAtlas" id="Q9BRC7"/>
<dbReference type="ProteomicsDB" id="78756">
    <molecule id="Q9BRC7-1"/>
</dbReference>
<dbReference type="ProteomicsDB" id="78757">
    <molecule id="Q9BRC7-2"/>
</dbReference>
<dbReference type="Antibodypedia" id="4087">
    <property type="antibodies" value="117 antibodies from 21 providers"/>
</dbReference>
<dbReference type="DNASU" id="84812"/>
<dbReference type="Ensembl" id="ENST00000417849.5">
    <molecule id="Q9BRC7-1"/>
    <property type="protein sequence ID" value="ENSP00000396942.1"/>
    <property type="gene ID" value="ENSG00000115556.14"/>
</dbReference>
<dbReference type="Ensembl" id="ENST00000450993.7">
    <molecule id="Q9BRC7-1"/>
    <property type="protein sequence ID" value="ENSP00000388631.2"/>
    <property type="gene ID" value="ENSG00000115556.14"/>
</dbReference>
<dbReference type="GeneID" id="84812"/>
<dbReference type="KEGG" id="hsa:84812"/>
<dbReference type="MANE-Select" id="ENST00000450993.7">
    <property type="protein sequence ID" value="ENSP00000388631.2"/>
    <property type="RefSeq nucleotide sequence ID" value="NM_032726.4"/>
    <property type="RefSeq protein sequence ID" value="NP_116115.1"/>
</dbReference>
<dbReference type="UCSC" id="uc061smf.1">
    <molecule id="Q9BRC7-1"/>
    <property type="organism name" value="human"/>
</dbReference>
<dbReference type="AGR" id="HGNC:9062"/>
<dbReference type="CTD" id="84812"/>
<dbReference type="DisGeNET" id="84812"/>
<dbReference type="GeneCards" id="PLCD4"/>
<dbReference type="HGNC" id="HGNC:9062">
    <property type="gene designation" value="PLCD4"/>
</dbReference>
<dbReference type="HPA" id="ENSG00000115556">
    <property type="expression patterns" value="Group enriched (retina, skeletal muscle)"/>
</dbReference>
<dbReference type="MIM" id="605939">
    <property type="type" value="gene"/>
</dbReference>
<dbReference type="neXtProt" id="NX_Q9BRC7"/>
<dbReference type="OpenTargets" id="ENSG00000115556"/>
<dbReference type="PharmGKB" id="PA33390"/>
<dbReference type="VEuPathDB" id="HostDB:ENSG00000115556"/>
<dbReference type="eggNOG" id="KOG0169">
    <property type="taxonomic scope" value="Eukaryota"/>
</dbReference>
<dbReference type="GeneTree" id="ENSGT00940000156180"/>
<dbReference type="HOGENOM" id="CLU_002738_0_2_1"/>
<dbReference type="InParanoid" id="Q9BRC7"/>
<dbReference type="OrthoDB" id="269822at2759"/>
<dbReference type="PAN-GO" id="Q9BRC7">
    <property type="GO annotations" value="2 GO annotations based on evolutionary models"/>
</dbReference>
<dbReference type="PhylomeDB" id="Q9BRC7"/>
<dbReference type="TreeFam" id="TF313216"/>
<dbReference type="PathwayCommons" id="Q9BRC7"/>
<dbReference type="Reactome" id="R-HSA-1855204">
    <property type="pathway name" value="Synthesis of IP3 and IP4 in the cytosol"/>
</dbReference>
<dbReference type="SignaLink" id="Q9BRC7"/>
<dbReference type="SIGNOR" id="Q9BRC7"/>
<dbReference type="BioGRID-ORCS" id="84812">
    <property type="hits" value="7 hits in 1149 CRISPR screens"/>
</dbReference>
<dbReference type="ChiTaRS" id="PLCD4">
    <property type="organism name" value="human"/>
</dbReference>
<dbReference type="GeneWiki" id="PLCD4"/>
<dbReference type="GenomeRNAi" id="84812"/>
<dbReference type="Pharos" id="Q9BRC7">
    <property type="development level" value="Tbio"/>
</dbReference>
<dbReference type="PRO" id="PR:Q9BRC7"/>
<dbReference type="Proteomes" id="UP000005640">
    <property type="component" value="Chromosome 2"/>
</dbReference>
<dbReference type="RNAct" id="Q9BRC7">
    <property type="molecule type" value="protein"/>
</dbReference>
<dbReference type="Bgee" id="ENSG00000115556">
    <property type="expression patterns" value="Expressed in hindlimb stylopod muscle and 122 other cell types or tissues"/>
</dbReference>
<dbReference type="ExpressionAtlas" id="Q9BRC7">
    <property type="expression patterns" value="baseline and differential"/>
</dbReference>
<dbReference type="GO" id="GO:0005829">
    <property type="term" value="C:cytosol"/>
    <property type="evidence" value="ECO:0000314"/>
    <property type="project" value="HPA"/>
</dbReference>
<dbReference type="GO" id="GO:0005783">
    <property type="term" value="C:endoplasmic reticulum"/>
    <property type="evidence" value="ECO:0000314"/>
    <property type="project" value="HPA"/>
</dbReference>
<dbReference type="GO" id="GO:0005789">
    <property type="term" value="C:endoplasmic reticulum membrane"/>
    <property type="evidence" value="ECO:0000304"/>
    <property type="project" value="Reactome"/>
</dbReference>
<dbReference type="GO" id="GO:0005634">
    <property type="term" value="C:nucleus"/>
    <property type="evidence" value="ECO:0007669"/>
    <property type="project" value="UniProtKB-SubCell"/>
</dbReference>
<dbReference type="GO" id="GO:0005886">
    <property type="term" value="C:plasma membrane"/>
    <property type="evidence" value="ECO:0000314"/>
    <property type="project" value="HPA"/>
</dbReference>
<dbReference type="GO" id="GO:0005509">
    <property type="term" value="F:calcium ion binding"/>
    <property type="evidence" value="ECO:0007669"/>
    <property type="project" value="InterPro"/>
</dbReference>
<dbReference type="GO" id="GO:0001965">
    <property type="term" value="F:G-protein alpha-subunit binding"/>
    <property type="evidence" value="ECO:0000353"/>
    <property type="project" value="UniProtKB"/>
</dbReference>
<dbReference type="GO" id="GO:0005085">
    <property type="term" value="F:guanyl-nucleotide exchange factor activity"/>
    <property type="evidence" value="ECO:0000314"/>
    <property type="project" value="UniProtKB"/>
</dbReference>
<dbReference type="GO" id="GO:0004435">
    <property type="term" value="F:phosphatidylinositol-4,5-bisphosphate phospholipase C activity"/>
    <property type="evidence" value="ECO:0000318"/>
    <property type="project" value="GO_Central"/>
</dbReference>
<dbReference type="GO" id="GO:0007340">
    <property type="term" value="P:acrosome reaction"/>
    <property type="evidence" value="ECO:0007669"/>
    <property type="project" value="Ensembl"/>
</dbReference>
<dbReference type="GO" id="GO:0035556">
    <property type="term" value="P:intracellular signal transduction"/>
    <property type="evidence" value="ECO:0007669"/>
    <property type="project" value="InterPro"/>
</dbReference>
<dbReference type="GO" id="GO:0016042">
    <property type="term" value="P:lipid catabolic process"/>
    <property type="evidence" value="ECO:0007669"/>
    <property type="project" value="UniProtKB-KW"/>
</dbReference>
<dbReference type="GO" id="GO:0007264">
    <property type="term" value="P:small GTPase-mediated signal transduction"/>
    <property type="evidence" value="ECO:0000314"/>
    <property type="project" value="UniProtKB"/>
</dbReference>
<dbReference type="CDD" id="cd00275">
    <property type="entry name" value="C2_PLC_like"/>
    <property type="match status" value="1"/>
</dbReference>
<dbReference type="CDD" id="cd13363">
    <property type="entry name" value="PH_PLC_delta"/>
    <property type="match status" value="1"/>
</dbReference>
<dbReference type="FunFam" id="1.10.238.10:FF:000005">
    <property type="entry name" value="Phosphoinositide phospholipase C"/>
    <property type="match status" value="1"/>
</dbReference>
<dbReference type="FunFam" id="1.10.238.10:FF:000145">
    <property type="entry name" value="Phosphoinositide phospholipase C"/>
    <property type="match status" value="1"/>
</dbReference>
<dbReference type="FunFam" id="2.30.29.30:FF:000088">
    <property type="entry name" value="Phosphoinositide phospholipase C"/>
    <property type="match status" value="1"/>
</dbReference>
<dbReference type="FunFam" id="2.60.40.150:FF:000058">
    <property type="entry name" value="Phosphoinositide phospholipase C"/>
    <property type="match status" value="1"/>
</dbReference>
<dbReference type="FunFam" id="3.20.20.190:FF:000020">
    <property type="entry name" value="Phosphoinositide phospholipase C"/>
    <property type="match status" value="1"/>
</dbReference>
<dbReference type="Gene3D" id="2.60.40.150">
    <property type="entry name" value="C2 domain"/>
    <property type="match status" value="1"/>
</dbReference>
<dbReference type="Gene3D" id="1.10.238.10">
    <property type="entry name" value="EF-hand"/>
    <property type="match status" value="2"/>
</dbReference>
<dbReference type="Gene3D" id="3.20.20.190">
    <property type="entry name" value="Phosphatidylinositol (PI) phosphodiesterase"/>
    <property type="match status" value="1"/>
</dbReference>
<dbReference type="Gene3D" id="2.30.29.30">
    <property type="entry name" value="Pleckstrin-homology domain (PH domain)/Phosphotyrosine-binding domain (PTB)"/>
    <property type="match status" value="1"/>
</dbReference>
<dbReference type="InterPro" id="IPR000008">
    <property type="entry name" value="C2_dom"/>
</dbReference>
<dbReference type="InterPro" id="IPR035892">
    <property type="entry name" value="C2_domain_sf"/>
</dbReference>
<dbReference type="InterPro" id="IPR011992">
    <property type="entry name" value="EF-hand-dom_pair"/>
</dbReference>
<dbReference type="InterPro" id="IPR018247">
    <property type="entry name" value="EF_Hand_1_Ca_BS"/>
</dbReference>
<dbReference type="InterPro" id="IPR002048">
    <property type="entry name" value="EF_hand_dom"/>
</dbReference>
<dbReference type="InterPro" id="IPR011993">
    <property type="entry name" value="PH-like_dom_sf"/>
</dbReference>
<dbReference type="InterPro" id="IPR001849">
    <property type="entry name" value="PH_domain"/>
</dbReference>
<dbReference type="InterPro" id="IPR001192">
    <property type="entry name" value="PI-PLC_fam"/>
</dbReference>
<dbReference type="InterPro" id="IPR017946">
    <property type="entry name" value="PLC-like_Pdiesterase_TIM-brl"/>
</dbReference>
<dbReference type="InterPro" id="IPR015359">
    <property type="entry name" value="PLC_EF-hand-like"/>
</dbReference>
<dbReference type="InterPro" id="IPR000909">
    <property type="entry name" value="PLipase_C_PInositol-sp_X_dom"/>
</dbReference>
<dbReference type="InterPro" id="IPR001711">
    <property type="entry name" value="PLipase_C_Pinositol-sp_Y"/>
</dbReference>
<dbReference type="PANTHER" id="PTHR10336:SF31">
    <property type="entry name" value="1-PHOSPHATIDYLINOSITOL 4,5-BISPHOSPHATE PHOSPHODIESTERASE DELTA-4"/>
    <property type="match status" value="1"/>
</dbReference>
<dbReference type="PANTHER" id="PTHR10336">
    <property type="entry name" value="PHOSPHOINOSITIDE-SPECIFIC PHOSPHOLIPASE C FAMILY PROTEIN"/>
    <property type="match status" value="1"/>
</dbReference>
<dbReference type="Pfam" id="PF00168">
    <property type="entry name" value="C2"/>
    <property type="match status" value="1"/>
</dbReference>
<dbReference type="Pfam" id="PF13202">
    <property type="entry name" value="EF-hand_5"/>
    <property type="match status" value="1"/>
</dbReference>
<dbReference type="Pfam" id="PF09279">
    <property type="entry name" value="EF-hand_like"/>
    <property type="match status" value="1"/>
</dbReference>
<dbReference type="Pfam" id="PF00169">
    <property type="entry name" value="PH"/>
    <property type="match status" value="1"/>
</dbReference>
<dbReference type="Pfam" id="PF00388">
    <property type="entry name" value="PI-PLC-X"/>
    <property type="match status" value="1"/>
</dbReference>
<dbReference type="Pfam" id="PF00387">
    <property type="entry name" value="PI-PLC-Y"/>
    <property type="match status" value="1"/>
</dbReference>
<dbReference type="PRINTS" id="PR00390">
    <property type="entry name" value="PHPHLIPASEC"/>
</dbReference>
<dbReference type="SMART" id="SM00239">
    <property type="entry name" value="C2"/>
    <property type="match status" value="1"/>
</dbReference>
<dbReference type="SMART" id="SM00054">
    <property type="entry name" value="EFh"/>
    <property type="match status" value="3"/>
</dbReference>
<dbReference type="SMART" id="SM00233">
    <property type="entry name" value="PH"/>
    <property type="match status" value="1"/>
</dbReference>
<dbReference type="SMART" id="SM00148">
    <property type="entry name" value="PLCXc"/>
    <property type="match status" value="1"/>
</dbReference>
<dbReference type="SMART" id="SM00149">
    <property type="entry name" value="PLCYc"/>
    <property type="match status" value="1"/>
</dbReference>
<dbReference type="SUPFAM" id="SSF49562">
    <property type="entry name" value="C2 domain (Calcium/lipid-binding domain, CaLB)"/>
    <property type="match status" value="1"/>
</dbReference>
<dbReference type="SUPFAM" id="SSF47473">
    <property type="entry name" value="EF-hand"/>
    <property type="match status" value="1"/>
</dbReference>
<dbReference type="SUPFAM" id="SSF50729">
    <property type="entry name" value="PH domain-like"/>
    <property type="match status" value="1"/>
</dbReference>
<dbReference type="SUPFAM" id="SSF51695">
    <property type="entry name" value="PLC-like phosphodiesterases"/>
    <property type="match status" value="1"/>
</dbReference>
<dbReference type="PROSITE" id="PS50004">
    <property type="entry name" value="C2"/>
    <property type="match status" value="1"/>
</dbReference>
<dbReference type="PROSITE" id="PS00018">
    <property type="entry name" value="EF_HAND_1"/>
    <property type="match status" value="2"/>
</dbReference>
<dbReference type="PROSITE" id="PS50222">
    <property type="entry name" value="EF_HAND_2"/>
    <property type="match status" value="3"/>
</dbReference>
<dbReference type="PROSITE" id="PS50003">
    <property type="entry name" value="PH_DOMAIN"/>
    <property type="match status" value="1"/>
</dbReference>
<dbReference type="PROSITE" id="PS50007">
    <property type="entry name" value="PIPLC_X_DOMAIN"/>
    <property type="match status" value="1"/>
</dbReference>
<dbReference type="PROSITE" id="PS50008">
    <property type="entry name" value="PIPLC_Y_DOMAIN"/>
    <property type="match status" value="1"/>
</dbReference>
<name>PLCD4_HUMAN</name>
<sequence length="762" mass="87585">MASLLQDQLTTDQDLLLMQEGMPMRKVRSKSWKKLRYFRLQNDGMTVWHARQARGSAKPSFSISDVETIRNGHDSELLRSLAEELPLEQGFTIVFHGRRSNLDLMANSVEEAQIWMRGLQLLVDLVTSMDHQERLDQWLSDWFQRGDKNQDGKMSFQEVQRLLHLMNVEMDQEYAFSLFQAADTSQSGTLEGEEFVQFYKALTKRAEVQELFESFSADGQKLTLLEFLDFLQEEQKERDCTSELALELIDRYEPSDSGKLRHVLSMDGFLSYLCSKDGDIFNPACLPIYQDMTQPLNHYFICSSHNTYLVGDQLCGQSSVEGYIRALKRGCRCVEVDVWDGPSGEPVVYHGHTLTSRILFKDVVATVAQYAFQTSDYPVILSLETHCSWEQQQTMARHLTEILGEQLLSTTLDGVLPTQLPSPEELRRKILVKGKKLTLEEDLEYEEEEAEPELEESELALESQFETEPEPQEQNLQNKDKKKKSKPILCPALSSLVIYLKSVSFRSFTHSKEHYHFYEISSFSETKAKRLIKEAGNEFVQHNTWQLSRVYPSGLRTDSSNYNPQELWNAGCQMVAMNMQTAGLEMDICDGHFRQNGGCGYVLKPDFLRDIQSSFHPEKPISPFKAQTLLIQVISGQQLPKVDKTKEGSIVDPLVKVQIFGVRLDTARQETNYVENNGFNPYWGQTLCFRVLVPELAMLRFVVMDYDWKSRNDFIGQYTLPWTCMQQGYRHIHLLSKDGISLRPASIFVYICIQEGLEGDES</sequence>
<evidence type="ECO:0000250" key="1"/>
<evidence type="ECO:0000250" key="2">
    <source>
        <dbReference type="UniProtKB" id="Q62711"/>
    </source>
</evidence>
<evidence type="ECO:0000250" key="3">
    <source>
        <dbReference type="UniProtKB" id="Q8K3R3"/>
    </source>
</evidence>
<evidence type="ECO:0000255" key="4">
    <source>
        <dbReference type="PROSITE-ProRule" id="PRU00041"/>
    </source>
</evidence>
<evidence type="ECO:0000255" key="5">
    <source>
        <dbReference type="PROSITE-ProRule" id="PRU00145"/>
    </source>
</evidence>
<evidence type="ECO:0000255" key="6">
    <source>
        <dbReference type="PROSITE-ProRule" id="PRU00270"/>
    </source>
</evidence>
<evidence type="ECO:0000255" key="7">
    <source>
        <dbReference type="PROSITE-ProRule" id="PRU00271"/>
    </source>
</evidence>
<evidence type="ECO:0000255" key="8">
    <source>
        <dbReference type="PROSITE-ProRule" id="PRU00448"/>
    </source>
</evidence>
<evidence type="ECO:0000256" key="9">
    <source>
        <dbReference type="SAM" id="MobiDB-lite"/>
    </source>
</evidence>
<evidence type="ECO:0000269" key="10">
    <source>
    </source>
</evidence>
<evidence type="ECO:0000269" key="11">
    <source>
    </source>
</evidence>
<evidence type="ECO:0000269" key="12">
    <source>
    </source>
</evidence>
<evidence type="ECO:0000303" key="13">
    <source>
    </source>
</evidence>
<evidence type="ECO:0000305" key="14"/>
<evidence type="ECO:0000305" key="15">
    <source>
    </source>
</evidence>
<evidence type="ECO:0000312" key="16">
    <source>
        <dbReference type="HGNC" id="HGNC:9062"/>
    </source>
</evidence>